<accession>A8AU87</accession>
<name>MNMG_STRGC</name>
<protein>
    <recommendedName>
        <fullName evidence="1">tRNA uridine 5-carboxymethylaminomethyl modification enzyme MnmG</fullName>
    </recommendedName>
    <alternativeName>
        <fullName evidence="1">Glucose-inhibited division protein A</fullName>
    </alternativeName>
</protein>
<reference key="1">
    <citation type="journal article" date="2007" name="J. Bacteriol.">
        <title>Genome-wide transcriptional changes in Streptococcus gordonii in response to competence signaling peptide.</title>
        <authorList>
            <person name="Vickerman M.M."/>
            <person name="Iobst S."/>
            <person name="Jesionowski A.M."/>
            <person name="Gill S.R."/>
        </authorList>
    </citation>
    <scope>NUCLEOTIDE SEQUENCE [LARGE SCALE GENOMIC DNA]</scope>
    <source>
        <strain>Challis / ATCC 35105 / BCRC 15272 / CH1 / DL1 / V288</strain>
    </source>
</reference>
<organism>
    <name type="scientific">Streptococcus gordonii (strain Challis / ATCC 35105 / BCRC 15272 / CH1 / DL1 / V288)</name>
    <dbReference type="NCBI Taxonomy" id="467705"/>
    <lineage>
        <taxon>Bacteria</taxon>
        <taxon>Bacillati</taxon>
        <taxon>Bacillota</taxon>
        <taxon>Bacilli</taxon>
        <taxon>Lactobacillales</taxon>
        <taxon>Streptococcaceae</taxon>
        <taxon>Streptococcus</taxon>
    </lineage>
</organism>
<feature type="chain" id="PRO_1000076337" description="tRNA uridine 5-carboxymethylaminomethyl modification enzyme MnmG">
    <location>
        <begin position="1"/>
        <end position="639"/>
    </location>
</feature>
<feature type="binding site" evidence="1">
    <location>
        <begin position="15"/>
        <end position="20"/>
    </location>
    <ligand>
        <name>FAD</name>
        <dbReference type="ChEBI" id="CHEBI:57692"/>
    </ligand>
</feature>
<feature type="binding site" evidence="1">
    <location>
        <begin position="276"/>
        <end position="290"/>
    </location>
    <ligand>
        <name>NAD(+)</name>
        <dbReference type="ChEBI" id="CHEBI:57540"/>
    </ligand>
</feature>
<sequence length="639" mass="71394">MSHNFTESYDIIVIGAGHAGVEASLAASRMGCKVLLATINIEMLAFMPCNPSIGGSAKGIVVREVDALGGEMAKNIDKSYIQMKMLNTGKGPAVRALRAQADKEVYSKEMRKTVENQENLTLRQTMINEILVEDGKVIGVKTATHQEYAAKAVIVTTGTALRGEIIIGDLKYSSGPNHSLAAIPLADNLRDLGFEIGRFKTGTPPRVKASSINYDVTEIQPGDEKANHFSYTSRDEDYVKDQVPCWLTYTNAESHEIIQNNLHRAPMFSGIVKGVGPRYCPSIEDKIVRFADKERHQLFLEPEGRDTEEVYVQGLSTSLPEDVQKDLVHSIKGLENAEMMRTGYAIEYDMIMPHQLRATLETKKISGLFTAGQTNGTSGYEEAAGQGIIAGINAALKIQGRPELILKRSDGYIGVMIDDLVTKGTVEPYRLLTSRAEYRLILRHDNADMRLTEMGREIGLVDDERWARFEIKKNQFDNEMKRLESIKLKPVKETNAKVEELGFKPLTDAVTAKEFMRRPEVSYQDVVQFIGPAAEELDEKIIELIETEIKYEGYISKALDQVEKMKRMEEKRIPANIDWDDIDSIATEARQKFKKINPETIGQASRISGVNPADISILMVYLEGKARSISKNKEKQNHV</sequence>
<comment type="function">
    <text evidence="1">NAD-binding protein involved in the addition of a carboxymethylaminomethyl (cmnm) group at the wobble position (U34) of certain tRNAs, forming tRNA-cmnm(5)s(2)U34.</text>
</comment>
<comment type="cofactor">
    <cofactor evidence="1">
        <name>FAD</name>
        <dbReference type="ChEBI" id="CHEBI:57692"/>
    </cofactor>
</comment>
<comment type="subunit">
    <text evidence="1">Homodimer. Heterotetramer of two MnmE and two MnmG subunits.</text>
</comment>
<comment type="subcellular location">
    <subcellularLocation>
        <location evidence="1">Cytoplasm</location>
    </subcellularLocation>
</comment>
<comment type="similarity">
    <text evidence="1">Belongs to the MnmG family.</text>
</comment>
<evidence type="ECO:0000255" key="1">
    <source>
        <dbReference type="HAMAP-Rule" id="MF_00129"/>
    </source>
</evidence>
<keyword id="KW-0963">Cytoplasm</keyword>
<keyword id="KW-0274">FAD</keyword>
<keyword id="KW-0285">Flavoprotein</keyword>
<keyword id="KW-0520">NAD</keyword>
<keyword id="KW-1185">Reference proteome</keyword>
<keyword id="KW-0819">tRNA processing</keyword>
<proteinExistence type="inferred from homology"/>
<dbReference type="EMBL" id="CP000725">
    <property type="protein sequence ID" value="ABV09461.1"/>
    <property type="molecule type" value="Genomic_DNA"/>
</dbReference>
<dbReference type="RefSeq" id="WP_011999579.1">
    <property type="nucleotide sequence ID" value="NC_009785.1"/>
</dbReference>
<dbReference type="SMR" id="A8AU87"/>
<dbReference type="STRING" id="467705.SGO_0025"/>
<dbReference type="KEGG" id="sgo:SGO_0025"/>
<dbReference type="eggNOG" id="COG0445">
    <property type="taxonomic scope" value="Bacteria"/>
</dbReference>
<dbReference type="HOGENOM" id="CLU_007831_2_2_9"/>
<dbReference type="Proteomes" id="UP000001131">
    <property type="component" value="Chromosome"/>
</dbReference>
<dbReference type="GO" id="GO:0005829">
    <property type="term" value="C:cytosol"/>
    <property type="evidence" value="ECO:0007669"/>
    <property type="project" value="TreeGrafter"/>
</dbReference>
<dbReference type="GO" id="GO:0050660">
    <property type="term" value="F:flavin adenine dinucleotide binding"/>
    <property type="evidence" value="ECO:0007669"/>
    <property type="project" value="UniProtKB-UniRule"/>
</dbReference>
<dbReference type="GO" id="GO:0030488">
    <property type="term" value="P:tRNA methylation"/>
    <property type="evidence" value="ECO:0007669"/>
    <property type="project" value="TreeGrafter"/>
</dbReference>
<dbReference type="GO" id="GO:0002098">
    <property type="term" value="P:tRNA wobble uridine modification"/>
    <property type="evidence" value="ECO:0007669"/>
    <property type="project" value="InterPro"/>
</dbReference>
<dbReference type="FunFam" id="1.10.10.1800:FF:000001">
    <property type="entry name" value="tRNA uridine 5-carboxymethylaminomethyl modification enzyme MnmG"/>
    <property type="match status" value="1"/>
</dbReference>
<dbReference type="FunFam" id="1.10.150.570:FF:000001">
    <property type="entry name" value="tRNA uridine 5-carboxymethylaminomethyl modification enzyme MnmG"/>
    <property type="match status" value="1"/>
</dbReference>
<dbReference type="FunFam" id="3.50.50.60:FF:000002">
    <property type="entry name" value="tRNA uridine 5-carboxymethylaminomethyl modification enzyme MnmG"/>
    <property type="match status" value="1"/>
</dbReference>
<dbReference type="FunFam" id="3.50.50.60:FF:000063">
    <property type="entry name" value="tRNA uridine 5-carboxymethylaminomethyl modification enzyme MnmG"/>
    <property type="match status" value="1"/>
</dbReference>
<dbReference type="Gene3D" id="3.50.50.60">
    <property type="entry name" value="FAD/NAD(P)-binding domain"/>
    <property type="match status" value="2"/>
</dbReference>
<dbReference type="Gene3D" id="1.10.150.570">
    <property type="entry name" value="GidA associated domain, C-terminal subdomain"/>
    <property type="match status" value="1"/>
</dbReference>
<dbReference type="Gene3D" id="1.10.10.1800">
    <property type="entry name" value="tRNA uridine 5-carboxymethylaminomethyl modification enzyme MnmG/GidA"/>
    <property type="match status" value="1"/>
</dbReference>
<dbReference type="HAMAP" id="MF_00129">
    <property type="entry name" value="MnmG_GidA"/>
    <property type="match status" value="1"/>
</dbReference>
<dbReference type="InterPro" id="IPR036188">
    <property type="entry name" value="FAD/NAD-bd_sf"/>
</dbReference>
<dbReference type="InterPro" id="IPR049312">
    <property type="entry name" value="GIDA_C_N"/>
</dbReference>
<dbReference type="InterPro" id="IPR004416">
    <property type="entry name" value="MnmG"/>
</dbReference>
<dbReference type="InterPro" id="IPR002218">
    <property type="entry name" value="MnmG-rel"/>
</dbReference>
<dbReference type="InterPro" id="IPR020595">
    <property type="entry name" value="MnmG-rel_CS"/>
</dbReference>
<dbReference type="InterPro" id="IPR026904">
    <property type="entry name" value="MnmG_C"/>
</dbReference>
<dbReference type="InterPro" id="IPR047001">
    <property type="entry name" value="MnmG_C_subdom"/>
</dbReference>
<dbReference type="InterPro" id="IPR044920">
    <property type="entry name" value="MnmG_C_subdom_sf"/>
</dbReference>
<dbReference type="InterPro" id="IPR040131">
    <property type="entry name" value="MnmG_N"/>
</dbReference>
<dbReference type="NCBIfam" id="TIGR00136">
    <property type="entry name" value="mnmG_gidA"/>
    <property type="match status" value="1"/>
</dbReference>
<dbReference type="PANTHER" id="PTHR11806">
    <property type="entry name" value="GLUCOSE INHIBITED DIVISION PROTEIN A"/>
    <property type="match status" value="1"/>
</dbReference>
<dbReference type="PANTHER" id="PTHR11806:SF0">
    <property type="entry name" value="PROTEIN MTO1 HOMOLOG, MITOCHONDRIAL"/>
    <property type="match status" value="1"/>
</dbReference>
<dbReference type="Pfam" id="PF01134">
    <property type="entry name" value="GIDA"/>
    <property type="match status" value="1"/>
</dbReference>
<dbReference type="Pfam" id="PF21680">
    <property type="entry name" value="GIDA_C_1st"/>
    <property type="match status" value="1"/>
</dbReference>
<dbReference type="Pfam" id="PF13932">
    <property type="entry name" value="SAM_GIDA_C"/>
    <property type="match status" value="1"/>
</dbReference>
<dbReference type="PRINTS" id="PR00411">
    <property type="entry name" value="PNDRDTASEI"/>
</dbReference>
<dbReference type="SMART" id="SM01228">
    <property type="entry name" value="GIDA_assoc_3"/>
    <property type="match status" value="1"/>
</dbReference>
<dbReference type="SUPFAM" id="SSF51905">
    <property type="entry name" value="FAD/NAD(P)-binding domain"/>
    <property type="match status" value="1"/>
</dbReference>
<dbReference type="PROSITE" id="PS01280">
    <property type="entry name" value="GIDA_1"/>
    <property type="match status" value="1"/>
</dbReference>
<dbReference type="PROSITE" id="PS01281">
    <property type="entry name" value="GIDA_2"/>
    <property type="match status" value="1"/>
</dbReference>
<gene>
    <name evidence="1" type="primary">mnmG</name>
    <name evidence="1" type="synonym">gidA</name>
    <name type="ordered locus">SGO_0025</name>
</gene>